<feature type="chain" id="PRO_0000085643" description="Serine/threonine-protein kinase ATG1">
    <location>
        <begin position="1"/>
        <end position="675"/>
    </location>
</feature>
<feature type="domain" description="Protein kinase" evidence="2">
    <location>
        <begin position="25"/>
        <end position="328"/>
    </location>
</feature>
<feature type="region of interest" description="Disordered" evidence="4">
    <location>
        <begin position="339"/>
        <end position="455"/>
    </location>
</feature>
<feature type="region of interest" description="Disordered" evidence="4">
    <location>
        <begin position="501"/>
        <end position="577"/>
    </location>
</feature>
<feature type="compositionally biased region" description="Basic and acidic residues" evidence="4">
    <location>
        <begin position="339"/>
        <end position="374"/>
    </location>
</feature>
<feature type="compositionally biased region" description="Polar residues" evidence="4">
    <location>
        <begin position="390"/>
        <end position="399"/>
    </location>
</feature>
<feature type="compositionally biased region" description="Polar residues" evidence="4">
    <location>
        <begin position="516"/>
        <end position="538"/>
    </location>
</feature>
<feature type="compositionally biased region" description="Polar residues" evidence="4">
    <location>
        <begin position="556"/>
        <end position="565"/>
    </location>
</feature>
<feature type="active site" description="Proton acceptor" evidence="2 3">
    <location>
        <position position="168"/>
    </location>
</feature>
<feature type="binding site" evidence="2">
    <location>
        <begin position="31"/>
        <end position="39"/>
    </location>
    <ligand>
        <name>ATP</name>
        <dbReference type="ChEBI" id="CHEBI:30616"/>
    </ligand>
</feature>
<feature type="binding site" evidence="2">
    <location>
        <position position="54"/>
    </location>
    <ligand>
        <name>ATP</name>
        <dbReference type="ChEBI" id="CHEBI:30616"/>
    </ligand>
</feature>
<evidence type="ECO:0000250" key="1">
    <source>
        <dbReference type="UniProtKB" id="P53104"/>
    </source>
</evidence>
<evidence type="ECO:0000255" key="2">
    <source>
        <dbReference type="PROSITE-ProRule" id="PRU00159"/>
    </source>
</evidence>
<evidence type="ECO:0000255" key="3">
    <source>
        <dbReference type="PROSITE-ProRule" id="PRU10027"/>
    </source>
</evidence>
<evidence type="ECO:0000256" key="4">
    <source>
        <dbReference type="SAM" id="MobiDB-lite"/>
    </source>
</evidence>
<evidence type="ECO:0000303" key="5">
    <source ref="1"/>
</evidence>
<accession>P87248</accession>
<sequence length="675" mass="75107">MADRLPTSTSSGRRRRDGDASIGEFVIGGEIGKGSFAQVYSGHHKNSKAAVAIKSVEMGRLNNKLRENLYGEIQILKTLRHPHIVALHDCVESATHINLVMEYCELGDLSFFIKKRDRHGTNAATEDMARKYPVTPGSGLHEVVTRHFLQQLASALKFLREKNYVHRDVKPQNLLLLPSPGFRKENSRPILTASNDSLIPNAGLASLPMLKLADFGFARVLPSTSLADTLCGSPLYMAPEILRYERYDAKADLWSVGTVLYEMITGRPPFRARNHVELLRKIEATEDKVKYPKDAVVSKDLVKLIGKLLTRNPVERMRFEDFFNDPVVVGPIPGVVEDDIPKVEQKPSRDLRSLEADPQREQSELAKSPRERPLRSPQLPSPDEVRVPQANVSARTGQSPGREIGEGLGIRRPPMPQPSTSAPSRPHRLSNASLNRPPIRASASPPTSYLNERKLRPVTERSMTEQDKAAQDVAFERDYVVVEKKHVEVNAFADEMAANPRLTSLSPKNGQMVRRATQQGPPTSTTGAGRMQPSSAVQIAQGKGRPGHDHPCVSLASRSLNTSSAARAPLRPCTTRSPRIRHRHPLLLLDSSVTADRAHHLTKMHGSSSSSKTSHIVVIVYMALPKSSLSNFSLWHLPWITPWVAPLPTKSMRMVLLSRQRWLCLRRLSCFTSRL</sequence>
<keyword id="KW-0067">ATP-binding</keyword>
<keyword id="KW-0072">Autophagy</keyword>
<keyword id="KW-0963">Cytoplasm</keyword>
<keyword id="KW-0418">Kinase</keyword>
<keyword id="KW-0472">Membrane</keyword>
<keyword id="KW-0547">Nucleotide-binding</keyword>
<keyword id="KW-0653">Protein transport</keyword>
<keyword id="KW-0723">Serine/threonine-protein kinase</keyword>
<keyword id="KW-0808">Transferase</keyword>
<keyword id="KW-0813">Transport</keyword>
<name>ATG1_COLLN</name>
<proteinExistence type="inferred from homology"/>
<comment type="function">
    <text evidence="1">Serine/threonine protein kinase involved in the cytoplasm to vacuole transport (Cvt) and found to be essential in autophagy, where it is required for the formation of autophagosomes. Involved in the clearance of protein aggregates which cannot be efficiently cleared by the proteasome. Required for selective autophagic degradation of the nucleus (nucleophagy) as well as for mitophagy which contributes to regulate mitochondrial quantity and quality by eliminating the mitochondria to a basal level to fulfill cellular energy requirements and preventing excess ROS production. Also involved in endoplasmic reticulum-specific autophagic process, in selective removal of ER-associated degradation (ERAD) substrates. Plays a key role in ATG9 and ATG23 cycling through the pre-autophagosomal structure and is necessary to promote ATG18 binding to ATG9 through phosphorylation of ATG9. Catalyzes phosphorylation of ATG4, decreasing the interaction between ATG4 and ATG8 and impairing deconjugation of PE-conjugated forms of ATG8.</text>
</comment>
<comment type="catalytic activity">
    <reaction evidence="1">
        <text>L-seryl-[protein] + ATP = O-phospho-L-seryl-[protein] + ADP + H(+)</text>
        <dbReference type="Rhea" id="RHEA:17989"/>
        <dbReference type="Rhea" id="RHEA-COMP:9863"/>
        <dbReference type="Rhea" id="RHEA-COMP:11604"/>
        <dbReference type="ChEBI" id="CHEBI:15378"/>
        <dbReference type="ChEBI" id="CHEBI:29999"/>
        <dbReference type="ChEBI" id="CHEBI:30616"/>
        <dbReference type="ChEBI" id="CHEBI:83421"/>
        <dbReference type="ChEBI" id="CHEBI:456216"/>
        <dbReference type="EC" id="2.7.11.1"/>
    </reaction>
</comment>
<comment type="catalytic activity">
    <reaction evidence="1">
        <text>L-threonyl-[protein] + ATP = O-phospho-L-threonyl-[protein] + ADP + H(+)</text>
        <dbReference type="Rhea" id="RHEA:46608"/>
        <dbReference type="Rhea" id="RHEA-COMP:11060"/>
        <dbReference type="Rhea" id="RHEA-COMP:11605"/>
        <dbReference type="ChEBI" id="CHEBI:15378"/>
        <dbReference type="ChEBI" id="CHEBI:30013"/>
        <dbReference type="ChEBI" id="CHEBI:30616"/>
        <dbReference type="ChEBI" id="CHEBI:61977"/>
        <dbReference type="ChEBI" id="CHEBI:456216"/>
        <dbReference type="EC" id="2.7.11.1"/>
    </reaction>
</comment>
<comment type="subunit">
    <text evidence="1">Homodimer. Forms a ternary complex with ATG13 and ATG17.</text>
</comment>
<comment type="subcellular location">
    <subcellularLocation>
        <location evidence="1">Cytoplasm</location>
    </subcellularLocation>
    <subcellularLocation>
        <location evidence="1">Preautophagosomal structure membrane</location>
        <topology evidence="1">Peripheral membrane protein</topology>
    </subcellularLocation>
</comment>
<comment type="similarity">
    <text evidence="2">Belongs to the protein kinase superfamily. Ser/Thr protein kinase family. APG1/unc-51/ULK1 subfamily.</text>
</comment>
<gene>
    <name evidence="1" type="primary">ATG1</name>
    <name evidence="5" type="synonym">clk1</name>
</gene>
<protein>
    <recommendedName>
        <fullName evidence="1">Serine/threonine-protein kinase ATG1</fullName>
        <ecNumber evidence="1">2.7.11.1</ecNumber>
    </recommendedName>
    <alternativeName>
        <fullName evidence="1">Autophagy-related protein 1</fullName>
    </alternativeName>
    <alternativeName>
        <fullName evidence="5">Colletotrichum lindemuthianum kinase 1</fullName>
    </alternativeName>
</protein>
<dbReference type="EC" id="2.7.11.1" evidence="1"/>
<dbReference type="EMBL" id="AF000309">
    <property type="protein sequence ID" value="AAB61403.1"/>
    <property type="molecule type" value="Genomic_DNA"/>
</dbReference>
<dbReference type="SMR" id="P87248"/>
<dbReference type="PHI-base" id="PHI:109"/>
<dbReference type="GO" id="GO:0005776">
    <property type="term" value="C:autophagosome"/>
    <property type="evidence" value="ECO:0007669"/>
    <property type="project" value="TreeGrafter"/>
</dbReference>
<dbReference type="GO" id="GO:0005829">
    <property type="term" value="C:cytosol"/>
    <property type="evidence" value="ECO:0007669"/>
    <property type="project" value="TreeGrafter"/>
</dbReference>
<dbReference type="GO" id="GO:0034045">
    <property type="term" value="C:phagophore assembly site membrane"/>
    <property type="evidence" value="ECO:0007669"/>
    <property type="project" value="UniProtKB-SubCell"/>
</dbReference>
<dbReference type="GO" id="GO:0005524">
    <property type="term" value="F:ATP binding"/>
    <property type="evidence" value="ECO:0007669"/>
    <property type="project" value="UniProtKB-KW"/>
</dbReference>
<dbReference type="GO" id="GO:0106310">
    <property type="term" value="F:protein serine kinase activity"/>
    <property type="evidence" value="ECO:0007669"/>
    <property type="project" value="RHEA"/>
</dbReference>
<dbReference type="GO" id="GO:0004674">
    <property type="term" value="F:protein serine/threonine kinase activity"/>
    <property type="evidence" value="ECO:0007669"/>
    <property type="project" value="UniProtKB-KW"/>
</dbReference>
<dbReference type="GO" id="GO:0000045">
    <property type="term" value="P:autophagosome assembly"/>
    <property type="evidence" value="ECO:0007669"/>
    <property type="project" value="TreeGrafter"/>
</dbReference>
<dbReference type="GO" id="GO:0000422">
    <property type="term" value="P:autophagy of mitochondrion"/>
    <property type="evidence" value="ECO:0007669"/>
    <property type="project" value="TreeGrafter"/>
</dbReference>
<dbReference type="GO" id="GO:0034727">
    <property type="term" value="P:piecemeal microautophagy of the nucleus"/>
    <property type="evidence" value="ECO:0007669"/>
    <property type="project" value="TreeGrafter"/>
</dbReference>
<dbReference type="GO" id="GO:0015031">
    <property type="term" value="P:protein transport"/>
    <property type="evidence" value="ECO:0007669"/>
    <property type="project" value="UniProtKB-KW"/>
</dbReference>
<dbReference type="GO" id="GO:0010506">
    <property type="term" value="P:regulation of autophagy"/>
    <property type="evidence" value="ECO:0007669"/>
    <property type="project" value="InterPro"/>
</dbReference>
<dbReference type="GO" id="GO:0042594">
    <property type="term" value="P:response to starvation"/>
    <property type="evidence" value="ECO:0007669"/>
    <property type="project" value="TreeGrafter"/>
</dbReference>
<dbReference type="GO" id="GO:0061709">
    <property type="term" value="P:reticulophagy"/>
    <property type="evidence" value="ECO:0007669"/>
    <property type="project" value="TreeGrafter"/>
</dbReference>
<dbReference type="CDD" id="cd14009">
    <property type="entry name" value="STKc_ATG1_ULK_like"/>
    <property type="match status" value="1"/>
</dbReference>
<dbReference type="FunFam" id="3.30.200.20:FF:000042">
    <property type="entry name" value="Aurora kinase A"/>
    <property type="match status" value="1"/>
</dbReference>
<dbReference type="FunFam" id="1.10.510.10:FF:000817">
    <property type="entry name" value="Serine/threonine-protein kinase ATG1"/>
    <property type="match status" value="1"/>
</dbReference>
<dbReference type="Gene3D" id="1.10.510.10">
    <property type="entry name" value="Transferase(Phosphotransferase) domain 1"/>
    <property type="match status" value="1"/>
</dbReference>
<dbReference type="InterPro" id="IPR045269">
    <property type="entry name" value="Atg1-like"/>
</dbReference>
<dbReference type="InterPro" id="IPR011009">
    <property type="entry name" value="Kinase-like_dom_sf"/>
</dbReference>
<dbReference type="InterPro" id="IPR000719">
    <property type="entry name" value="Prot_kinase_dom"/>
</dbReference>
<dbReference type="InterPro" id="IPR017441">
    <property type="entry name" value="Protein_kinase_ATP_BS"/>
</dbReference>
<dbReference type="InterPro" id="IPR008271">
    <property type="entry name" value="Ser/Thr_kinase_AS"/>
</dbReference>
<dbReference type="PANTHER" id="PTHR24348:SF22">
    <property type="entry name" value="NON-SPECIFIC SERINE_THREONINE PROTEIN KINASE"/>
    <property type="match status" value="1"/>
</dbReference>
<dbReference type="PANTHER" id="PTHR24348">
    <property type="entry name" value="SERINE/THREONINE-PROTEIN KINASE UNC-51-RELATED"/>
    <property type="match status" value="1"/>
</dbReference>
<dbReference type="Pfam" id="PF00069">
    <property type="entry name" value="Pkinase"/>
    <property type="match status" value="1"/>
</dbReference>
<dbReference type="SMART" id="SM00220">
    <property type="entry name" value="S_TKc"/>
    <property type="match status" value="1"/>
</dbReference>
<dbReference type="SUPFAM" id="SSF56112">
    <property type="entry name" value="Protein kinase-like (PK-like)"/>
    <property type="match status" value="1"/>
</dbReference>
<dbReference type="PROSITE" id="PS00107">
    <property type="entry name" value="PROTEIN_KINASE_ATP"/>
    <property type="match status" value="1"/>
</dbReference>
<dbReference type="PROSITE" id="PS50011">
    <property type="entry name" value="PROTEIN_KINASE_DOM"/>
    <property type="match status" value="1"/>
</dbReference>
<dbReference type="PROSITE" id="PS00108">
    <property type="entry name" value="PROTEIN_KINASE_ST"/>
    <property type="match status" value="1"/>
</dbReference>
<reference key="1">
    <citation type="submission" date="1997-04" db="EMBL/GenBank/DDBJ databases">
        <authorList>
            <person name="Dufresne M."/>
            <person name="Langin T."/>
        </authorList>
    </citation>
    <scope>NUCLEOTIDE SEQUENCE [GENOMIC DNA]</scope>
    <source>
        <strain>UPS9</strain>
    </source>
</reference>
<organism>
    <name type="scientific">Colletotrichum lindemuthianum</name>
    <name type="common">Bean anthracnose fungus</name>
    <name type="synonym">Glomerella lindemuthiana</name>
    <dbReference type="NCBI Taxonomy" id="290576"/>
    <lineage>
        <taxon>Eukaryota</taxon>
        <taxon>Fungi</taxon>
        <taxon>Dikarya</taxon>
        <taxon>Ascomycota</taxon>
        <taxon>Pezizomycotina</taxon>
        <taxon>Sordariomycetes</taxon>
        <taxon>Hypocreomycetidae</taxon>
        <taxon>Glomerellales</taxon>
        <taxon>Glomerellaceae</taxon>
        <taxon>Colletotrichum</taxon>
        <taxon>Colletotrichum orbiculare species complex</taxon>
    </lineage>
</organism>